<feature type="chain" id="PRO_0000203560" description="Anti-sigma F factor">
    <location>
        <begin position="1"/>
        <end position="146"/>
    </location>
</feature>
<feature type="strand" evidence="2">
    <location>
        <begin position="3"/>
        <end position="11"/>
    </location>
</feature>
<feature type="helix" evidence="2">
    <location>
        <begin position="15"/>
        <end position="27"/>
    </location>
</feature>
<feature type="helix" evidence="2">
    <location>
        <begin position="28"/>
        <end position="30"/>
    </location>
</feature>
<feature type="helix" evidence="2">
    <location>
        <begin position="34"/>
        <end position="53"/>
    </location>
</feature>
<feature type="strand" evidence="4">
    <location>
        <begin position="56"/>
        <end position="58"/>
    </location>
</feature>
<feature type="strand" evidence="2">
    <location>
        <begin position="62"/>
        <end position="71"/>
    </location>
</feature>
<feature type="strand" evidence="2">
    <location>
        <begin position="74"/>
        <end position="81"/>
    </location>
</feature>
<feature type="helix" evidence="2">
    <location>
        <begin position="89"/>
        <end position="92"/>
    </location>
</feature>
<feature type="turn" evidence="3">
    <location>
        <begin position="101"/>
        <end position="104"/>
    </location>
</feature>
<feature type="helix" evidence="2">
    <location>
        <begin position="109"/>
        <end position="116"/>
    </location>
</feature>
<feature type="strand" evidence="2">
    <location>
        <begin position="117"/>
        <end position="125"/>
    </location>
</feature>
<feature type="turn" evidence="2">
    <location>
        <begin position="126"/>
        <end position="128"/>
    </location>
</feature>
<feature type="strand" evidence="2">
    <location>
        <begin position="129"/>
        <end position="136"/>
    </location>
</feature>
<dbReference type="EC" id="2.7.11.1" evidence="1"/>
<dbReference type="EMBL" id="L47360">
    <property type="protein sequence ID" value="AAB81193.1"/>
    <property type="molecule type" value="Genomic_DNA"/>
</dbReference>
<dbReference type="PDB" id="1L0O">
    <property type="method" value="X-ray"/>
    <property type="resolution" value="2.90 A"/>
    <property type="chains" value="A/B=1-136"/>
</dbReference>
<dbReference type="PDB" id="1TH8">
    <property type="method" value="X-ray"/>
    <property type="resolution" value="2.40 A"/>
    <property type="chains" value="A=1-136"/>
</dbReference>
<dbReference type="PDB" id="1THN">
    <property type="method" value="X-ray"/>
    <property type="resolution" value="2.50 A"/>
    <property type="chains" value="A/C=1-136"/>
</dbReference>
<dbReference type="PDB" id="1TID">
    <property type="method" value="X-ray"/>
    <property type="resolution" value="2.50 A"/>
    <property type="chains" value="A/C=1-136"/>
</dbReference>
<dbReference type="PDB" id="1TIL">
    <property type="method" value="X-ray"/>
    <property type="resolution" value="2.70 A"/>
    <property type="chains" value="A/C/E=1-136"/>
</dbReference>
<dbReference type="PDBsum" id="1L0O"/>
<dbReference type="PDBsum" id="1TH8"/>
<dbReference type="PDBsum" id="1THN"/>
<dbReference type="PDBsum" id="1TID"/>
<dbReference type="PDBsum" id="1TIL"/>
<dbReference type="SMR" id="O32727"/>
<dbReference type="IntAct" id="O32727">
    <property type="interactions" value="2"/>
</dbReference>
<dbReference type="EvolutionaryTrace" id="O32727"/>
<dbReference type="GO" id="GO:0005524">
    <property type="term" value="F:ATP binding"/>
    <property type="evidence" value="ECO:0007669"/>
    <property type="project" value="UniProtKB-KW"/>
</dbReference>
<dbReference type="GO" id="GO:0106310">
    <property type="term" value="F:protein serine kinase activity"/>
    <property type="evidence" value="ECO:0007669"/>
    <property type="project" value="RHEA"/>
</dbReference>
<dbReference type="GO" id="GO:0004674">
    <property type="term" value="F:protein serine/threonine kinase activity"/>
    <property type="evidence" value="ECO:0007669"/>
    <property type="project" value="UniProtKB-KW"/>
</dbReference>
<dbReference type="GO" id="GO:0016989">
    <property type="term" value="F:sigma factor antagonist activity"/>
    <property type="evidence" value="ECO:0007669"/>
    <property type="project" value="InterPro"/>
</dbReference>
<dbReference type="GO" id="GO:0030436">
    <property type="term" value="P:asexual sporulation"/>
    <property type="evidence" value="ECO:0007669"/>
    <property type="project" value="UniProtKB-UniRule"/>
</dbReference>
<dbReference type="GO" id="GO:0042174">
    <property type="term" value="P:negative regulation of sporulation resulting in formation of a cellular spore"/>
    <property type="evidence" value="ECO:0007669"/>
    <property type="project" value="InterPro"/>
</dbReference>
<dbReference type="GO" id="GO:0030435">
    <property type="term" value="P:sporulation resulting in formation of a cellular spore"/>
    <property type="evidence" value="ECO:0007669"/>
    <property type="project" value="UniProtKB-KW"/>
</dbReference>
<dbReference type="CDD" id="cd16942">
    <property type="entry name" value="HATPase_SpoIIAB-like"/>
    <property type="match status" value="1"/>
</dbReference>
<dbReference type="Gene3D" id="3.30.565.10">
    <property type="entry name" value="Histidine kinase-like ATPase, C-terminal domain"/>
    <property type="match status" value="1"/>
</dbReference>
<dbReference type="HAMAP" id="MF_00637">
    <property type="entry name" value="Anti_sigma_F"/>
    <property type="match status" value="1"/>
</dbReference>
<dbReference type="InterPro" id="IPR050267">
    <property type="entry name" value="Anti-sigma-factor_SerPK"/>
</dbReference>
<dbReference type="InterPro" id="IPR010194">
    <property type="entry name" value="Anti-sigma_F"/>
</dbReference>
<dbReference type="InterPro" id="IPR036890">
    <property type="entry name" value="HATPase_C_sf"/>
</dbReference>
<dbReference type="NCBIfam" id="TIGR01925">
    <property type="entry name" value="spIIAB"/>
    <property type="match status" value="1"/>
</dbReference>
<dbReference type="PANTHER" id="PTHR35526:SF3">
    <property type="entry name" value="ANTI-SIGMA-F FACTOR RSBW"/>
    <property type="match status" value="1"/>
</dbReference>
<dbReference type="PANTHER" id="PTHR35526">
    <property type="entry name" value="ANTI-SIGMA-F FACTOR RSBW-RELATED"/>
    <property type="match status" value="1"/>
</dbReference>
<dbReference type="Pfam" id="PF13581">
    <property type="entry name" value="HATPase_c_2"/>
    <property type="match status" value="1"/>
</dbReference>
<dbReference type="SMART" id="SM00387">
    <property type="entry name" value="HATPase_c"/>
    <property type="match status" value="1"/>
</dbReference>
<dbReference type="SUPFAM" id="SSF55874">
    <property type="entry name" value="ATPase domain of HSP90 chaperone/DNA topoisomerase II/histidine kinase"/>
    <property type="match status" value="1"/>
</dbReference>
<protein>
    <recommendedName>
        <fullName evidence="1">Anti-sigma F factor</fullName>
        <ecNumber evidence="1">2.7.11.1</ecNumber>
    </recommendedName>
    <alternativeName>
        <fullName evidence="1">Stage II sporulation protein AB</fullName>
    </alternativeName>
</protein>
<organism>
    <name type="scientific">Geobacillus stearothermophilus</name>
    <name type="common">Bacillus stearothermophilus</name>
    <dbReference type="NCBI Taxonomy" id="1422"/>
    <lineage>
        <taxon>Bacteria</taxon>
        <taxon>Bacillati</taxon>
        <taxon>Bacillota</taxon>
        <taxon>Bacilli</taxon>
        <taxon>Bacillales</taxon>
        <taxon>Anoxybacillaceae</taxon>
        <taxon>Geobacillus</taxon>
    </lineage>
</organism>
<proteinExistence type="evidence at protein level"/>
<name>SP2AB_GEOSE</name>
<comment type="function">
    <text evidence="1">Binds to sigma F and blocks its ability to form an RNA polymerase holoenzyme (E-sigma F). Phosphorylates SpoIIAA on a serine residue. This phosphorylation may enable SpoIIAA to act as an anti-anti-sigma factor that counteracts SpoIIAB and thus releases sigma F from inhibition.</text>
</comment>
<comment type="catalytic activity">
    <reaction evidence="1">
        <text>L-seryl-[protein] + ATP = O-phospho-L-seryl-[protein] + ADP + H(+)</text>
        <dbReference type="Rhea" id="RHEA:17989"/>
        <dbReference type="Rhea" id="RHEA-COMP:9863"/>
        <dbReference type="Rhea" id="RHEA-COMP:11604"/>
        <dbReference type="ChEBI" id="CHEBI:15378"/>
        <dbReference type="ChEBI" id="CHEBI:29999"/>
        <dbReference type="ChEBI" id="CHEBI:30616"/>
        <dbReference type="ChEBI" id="CHEBI:83421"/>
        <dbReference type="ChEBI" id="CHEBI:456216"/>
        <dbReference type="EC" id="2.7.11.1"/>
    </reaction>
</comment>
<comment type="catalytic activity">
    <reaction evidence="1">
        <text>L-threonyl-[protein] + ATP = O-phospho-L-threonyl-[protein] + ADP + H(+)</text>
        <dbReference type="Rhea" id="RHEA:46608"/>
        <dbReference type="Rhea" id="RHEA-COMP:11060"/>
        <dbReference type="Rhea" id="RHEA-COMP:11605"/>
        <dbReference type="ChEBI" id="CHEBI:15378"/>
        <dbReference type="ChEBI" id="CHEBI:30013"/>
        <dbReference type="ChEBI" id="CHEBI:30616"/>
        <dbReference type="ChEBI" id="CHEBI:61977"/>
        <dbReference type="ChEBI" id="CHEBI:456216"/>
        <dbReference type="EC" id="2.7.11.1"/>
    </reaction>
</comment>
<comment type="interaction">
    <interactant intactId="EBI-1033242">
        <id>O32727</id>
    </interactant>
    <interactant intactId="EBI-1039369">
        <id>O32726</id>
        <label>spoIIAA</label>
    </interactant>
    <organismsDiffer>false</organismsDiffer>
    <experiments>4</experiments>
</comment>
<comment type="interaction">
    <interactant intactId="EBI-1033242">
        <id>O32727</id>
    </interactant>
    <interactant intactId="EBI-1033248">
        <id>O32728</id>
    </interactant>
    <organismsDiffer>false</organismsDiffer>
    <experiments>5</experiments>
</comment>
<comment type="similarity">
    <text evidence="1">Belongs to the anti-sigma-factor family.</text>
</comment>
<gene>
    <name evidence="1" type="primary">spoIIAB</name>
</gene>
<sequence length="146" mass="16239">MRNEMHLQFSARSENESFARVTVAAFVAQLDPTTDELTEIKTVVSEAVTNAIIHGYNNDPNGIVSISVIIEDGVVHLTVRDEGVGIPDIEEARQPLFTTKPELERSGMGFTIMENFMDEVIVESEVNKGTTVYLKKAYCEKQTLCN</sequence>
<evidence type="ECO:0000255" key="1">
    <source>
        <dbReference type="HAMAP-Rule" id="MF_00637"/>
    </source>
</evidence>
<evidence type="ECO:0007829" key="2">
    <source>
        <dbReference type="PDB" id="1TH8"/>
    </source>
</evidence>
<evidence type="ECO:0007829" key="3">
    <source>
        <dbReference type="PDB" id="1THN"/>
    </source>
</evidence>
<evidence type="ECO:0007829" key="4">
    <source>
        <dbReference type="PDB" id="1TID"/>
    </source>
</evidence>
<reference key="1">
    <citation type="journal article" date="1997" name="Gene">
        <title>Sequencing and phylogenetic analysis of the spoIIA operon from diverse Bacillus and Paenibacillus species.</title>
        <authorList>
            <person name="Park S.G."/>
            <person name="Yudkin M.D."/>
        </authorList>
    </citation>
    <scope>NUCLEOTIDE SEQUENCE [GENOMIC DNA]</scope>
    <source>
        <strain>ATCC 12980 / DSM 22 / CCM 2062 / JCM 2501 / NBRC 12550 / NCIMB 8923 / NCTC 10339 / R-35646 / VKM B-510</strain>
    </source>
</reference>
<accession>O32727</accession>
<keyword id="KW-0002">3D-structure</keyword>
<keyword id="KW-0067">ATP-binding</keyword>
<keyword id="KW-0418">Kinase</keyword>
<keyword id="KW-0547">Nucleotide-binding</keyword>
<keyword id="KW-0723">Serine/threonine-protein kinase</keyword>
<keyword id="KW-0749">Sporulation</keyword>
<keyword id="KW-0808">Transferase</keyword>